<keyword id="KW-0418">Kinase</keyword>
<keyword id="KW-0547">Nucleotide-binding</keyword>
<keyword id="KW-0723">Serine/threonine-protein kinase</keyword>
<keyword id="KW-0808">Transferase</keyword>
<feature type="chain" id="PRO_0000196704" description="Putative pyruvate, phosphate dikinase regulatory protein">
    <location>
        <begin position="1"/>
        <end position="273"/>
    </location>
</feature>
<feature type="binding site" evidence="1">
    <location>
        <begin position="149"/>
        <end position="156"/>
    </location>
    <ligand>
        <name>ADP</name>
        <dbReference type="ChEBI" id="CHEBI:456216"/>
    </ligand>
</feature>
<dbReference type="EC" id="2.7.11.32" evidence="1"/>
<dbReference type="EC" id="2.7.4.27" evidence="1"/>
<dbReference type="EMBL" id="AE017197">
    <property type="protein sequence ID" value="AAU03491.1"/>
    <property type="molecule type" value="Genomic_DNA"/>
</dbReference>
<dbReference type="RefSeq" id="WP_011190478.1">
    <property type="nucleotide sequence ID" value="NC_006142.1"/>
</dbReference>
<dbReference type="SMR" id="Q68Y01"/>
<dbReference type="KEGG" id="rty:RT0001"/>
<dbReference type="eggNOG" id="COG1806">
    <property type="taxonomic scope" value="Bacteria"/>
</dbReference>
<dbReference type="HOGENOM" id="CLU_046206_2_0_5"/>
<dbReference type="OrthoDB" id="9782201at2"/>
<dbReference type="Proteomes" id="UP000000604">
    <property type="component" value="Chromosome"/>
</dbReference>
<dbReference type="GO" id="GO:0043531">
    <property type="term" value="F:ADP binding"/>
    <property type="evidence" value="ECO:0007669"/>
    <property type="project" value="UniProtKB-UniRule"/>
</dbReference>
<dbReference type="GO" id="GO:0005524">
    <property type="term" value="F:ATP binding"/>
    <property type="evidence" value="ECO:0007669"/>
    <property type="project" value="InterPro"/>
</dbReference>
<dbReference type="GO" id="GO:0016776">
    <property type="term" value="F:phosphotransferase activity, phosphate group as acceptor"/>
    <property type="evidence" value="ECO:0007669"/>
    <property type="project" value="UniProtKB-UniRule"/>
</dbReference>
<dbReference type="GO" id="GO:0004674">
    <property type="term" value="F:protein serine/threonine kinase activity"/>
    <property type="evidence" value="ECO:0007669"/>
    <property type="project" value="UniProtKB-UniRule"/>
</dbReference>
<dbReference type="Gene3D" id="3.40.50.300">
    <property type="entry name" value="P-loop containing nucleotide triphosphate hydrolases"/>
    <property type="match status" value="1"/>
</dbReference>
<dbReference type="HAMAP" id="MF_00921">
    <property type="entry name" value="PDRP"/>
    <property type="match status" value="1"/>
</dbReference>
<dbReference type="InterPro" id="IPR005177">
    <property type="entry name" value="Kinase-pyrophosphorylase"/>
</dbReference>
<dbReference type="InterPro" id="IPR027417">
    <property type="entry name" value="P-loop_NTPase"/>
</dbReference>
<dbReference type="InterPro" id="IPR026565">
    <property type="entry name" value="PPDK_reg"/>
</dbReference>
<dbReference type="NCBIfam" id="NF003742">
    <property type="entry name" value="PRK05339.1"/>
    <property type="match status" value="1"/>
</dbReference>
<dbReference type="PANTHER" id="PTHR31756">
    <property type="entry name" value="PYRUVATE, PHOSPHATE DIKINASE REGULATORY PROTEIN 1, CHLOROPLASTIC"/>
    <property type="match status" value="1"/>
</dbReference>
<dbReference type="PANTHER" id="PTHR31756:SF3">
    <property type="entry name" value="PYRUVATE, PHOSPHATE DIKINASE REGULATORY PROTEIN 1, CHLOROPLASTIC"/>
    <property type="match status" value="1"/>
</dbReference>
<dbReference type="Pfam" id="PF03618">
    <property type="entry name" value="Kinase-PPPase"/>
    <property type="match status" value="1"/>
</dbReference>
<comment type="function">
    <text evidence="1">Bifunctional serine/threonine kinase and phosphorylase involved in the regulation of the pyruvate, phosphate dikinase (PPDK) by catalyzing its phosphorylation/dephosphorylation.</text>
</comment>
<comment type="catalytic activity">
    <reaction evidence="1">
        <text>N(tele)-phospho-L-histidyl/L-threonyl-[pyruvate, phosphate dikinase] + ADP = N(tele)-phospho-L-histidyl/O-phospho-L-threonyl-[pyruvate, phosphate dikinase] + AMP + H(+)</text>
        <dbReference type="Rhea" id="RHEA:43692"/>
        <dbReference type="Rhea" id="RHEA-COMP:10650"/>
        <dbReference type="Rhea" id="RHEA-COMP:10651"/>
        <dbReference type="ChEBI" id="CHEBI:15378"/>
        <dbReference type="ChEBI" id="CHEBI:30013"/>
        <dbReference type="ChEBI" id="CHEBI:61977"/>
        <dbReference type="ChEBI" id="CHEBI:83586"/>
        <dbReference type="ChEBI" id="CHEBI:456215"/>
        <dbReference type="ChEBI" id="CHEBI:456216"/>
        <dbReference type="EC" id="2.7.11.32"/>
    </reaction>
</comment>
<comment type="catalytic activity">
    <reaction evidence="1">
        <text>N(tele)-phospho-L-histidyl/O-phospho-L-threonyl-[pyruvate, phosphate dikinase] + phosphate + H(+) = N(tele)-phospho-L-histidyl/L-threonyl-[pyruvate, phosphate dikinase] + diphosphate</text>
        <dbReference type="Rhea" id="RHEA:43696"/>
        <dbReference type="Rhea" id="RHEA-COMP:10650"/>
        <dbReference type="Rhea" id="RHEA-COMP:10651"/>
        <dbReference type="ChEBI" id="CHEBI:15378"/>
        <dbReference type="ChEBI" id="CHEBI:30013"/>
        <dbReference type="ChEBI" id="CHEBI:33019"/>
        <dbReference type="ChEBI" id="CHEBI:43474"/>
        <dbReference type="ChEBI" id="CHEBI:61977"/>
        <dbReference type="ChEBI" id="CHEBI:83586"/>
        <dbReference type="EC" id="2.7.4.27"/>
    </reaction>
</comment>
<comment type="similarity">
    <text evidence="1">Belongs to the pyruvate, phosphate/water dikinase regulatory protein family. PDRP subfamily.</text>
</comment>
<accession>Q68Y01</accession>
<protein>
    <recommendedName>
        <fullName evidence="1">Putative pyruvate, phosphate dikinase regulatory protein</fullName>
        <shortName evidence="1">PPDK regulatory protein</shortName>
        <ecNumber evidence="1">2.7.11.32</ecNumber>
        <ecNumber evidence="1">2.7.4.27</ecNumber>
    </recommendedName>
</protein>
<evidence type="ECO:0000255" key="1">
    <source>
        <dbReference type="HAMAP-Rule" id="MF_00921"/>
    </source>
</evidence>
<gene>
    <name type="ordered locus">RT0001</name>
</gene>
<name>PDRP_RICTY</name>
<organism>
    <name type="scientific">Rickettsia typhi (strain ATCC VR-144 / Wilmington)</name>
    <dbReference type="NCBI Taxonomy" id="257363"/>
    <lineage>
        <taxon>Bacteria</taxon>
        <taxon>Pseudomonadati</taxon>
        <taxon>Pseudomonadota</taxon>
        <taxon>Alphaproteobacteria</taxon>
        <taxon>Rickettsiales</taxon>
        <taxon>Rickettsiaceae</taxon>
        <taxon>Rickettsieae</taxon>
        <taxon>Rickettsia</taxon>
        <taxon>typhus group</taxon>
    </lineage>
</organism>
<proteinExistence type="inferred from homology"/>
<sequence>MTKLIIHLVSDSSVQTVKHAANSALAQFTSIKQKLYHWPMIRNLELLNEVLSKIESKHGIVLYTIADQELRKALTKFCYELKIPCISVIGKIIKEMSVFSGIEIEKEQNYNYKFDKTYFDTLNAIDYAIRHDDGQMINELSESDIILIGPSRTSKTPTSVFLAYNGLKAANIPYVYNCPFPDFIEKNIDQLVVGLVINPNRLIEIREARLNLLQINENKSYTDFNIVQRECIEVRKICNQRNWPVIDVSTRSIEETAALIMRIYYNRKNKYHK</sequence>
<reference key="1">
    <citation type="journal article" date="2004" name="J. Bacteriol.">
        <title>Complete genome sequence of Rickettsia typhi and comparison with sequences of other Rickettsiae.</title>
        <authorList>
            <person name="McLeod M.P."/>
            <person name="Qin X."/>
            <person name="Karpathy S.E."/>
            <person name="Gioia J."/>
            <person name="Highlander S.K."/>
            <person name="Fox G.E."/>
            <person name="McNeill T.Z."/>
            <person name="Jiang H."/>
            <person name="Muzny D."/>
            <person name="Jacob L.S."/>
            <person name="Hawes A.C."/>
            <person name="Sodergren E."/>
            <person name="Gill R."/>
            <person name="Hume J."/>
            <person name="Morgan M."/>
            <person name="Fan G."/>
            <person name="Amin A.G."/>
            <person name="Gibbs R.A."/>
            <person name="Hong C."/>
            <person name="Yu X.-J."/>
            <person name="Walker D.H."/>
            <person name="Weinstock G.M."/>
        </authorList>
    </citation>
    <scope>NUCLEOTIDE SEQUENCE [LARGE SCALE GENOMIC DNA]</scope>
    <source>
        <strain>ATCC VR-144 / Wilmington</strain>
    </source>
</reference>